<sequence length="555" mass="64000">MTTSSPPQAVTTLTESIKNLLESNFCHVVVKGELSNVSLQPSGHLYFGIKDSRSFLNGAFFHFKSKYFDRRPKDGDSVIIHGKLTVYAPRGQYQIVAHALVYAGEGDLLQKFEETKKRLAAEGYFALEKKQTLPNIPQSIGVITSPTGAVIQDILRVLSRRCYQYKILIYPVTVQGATAAKEISRAIEEMNKENLADVLILARGGGSIEDLWAFNEEIVVKAIDASSIPIISAIGHETDYTLCDFAADVRAPTPSAAAEIVCQSSEQQIQVFKSYLRYLNAHSQQLLSGKIKQIQQWKRYLDHVDFFRSAHQSLDYLCLSVERSIQTKLSQYKQRYMQYARWLQSDVLQRMTYRLHDLWKMIVQAFHNRLTAAKHLCMQKKKNLTFHNTQQFIQKLDLWKQQLHRALTQRLGYCSQSLTHQQTLLKHFTIKLNQQFTKGKHTLNLLQKRLTRTFANTVDEHRENYVRSRENLIFSLHHLVERNREKYYTLSKQLTLLNPKNVFKRGYAMLFDFNENFAIISAKSLHKHSCVRVRLQDGEATLTVTDIQNFETQES</sequence>
<feature type="chain" id="PRO_0000303781" description="Exodeoxyribonuclease 7 large subunit">
    <location>
        <begin position="1"/>
        <end position="555"/>
    </location>
</feature>
<accession>Q253S0</accession>
<gene>
    <name evidence="1" type="primary">xseA</name>
    <name type="ordered locus">CF0696</name>
</gene>
<evidence type="ECO:0000255" key="1">
    <source>
        <dbReference type="HAMAP-Rule" id="MF_00378"/>
    </source>
</evidence>
<dbReference type="EC" id="3.1.11.6" evidence="1"/>
<dbReference type="EMBL" id="AP006861">
    <property type="protein sequence ID" value="BAE81468.1"/>
    <property type="molecule type" value="Genomic_DNA"/>
</dbReference>
<dbReference type="RefSeq" id="WP_011458246.1">
    <property type="nucleotide sequence ID" value="NC_007899.1"/>
</dbReference>
<dbReference type="SMR" id="Q253S0"/>
<dbReference type="STRING" id="264202.CF0696"/>
<dbReference type="KEGG" id="cfe:CF0696"/>
<dbReference type="eggNOG" id="COG1570">
    <property type="taxonomic scope" value="Bacteria"/>
</dbReference>
<dbReference type="HOGENOM" id="CLU_023625_5_0_0"/>
<dbReference type="OrthoDB" id="9802795at2"/>
<dbReference type="Proteomes" id="UP000001260">
    <property type="component" value="Chromosome"/>
</dbReference>
<dbReference type="GO" id="GO:0005737">
    <property type="term" value="C:cytoplasm"/>
    <property type="evidence" value="ECO:0007669"/>
    <property type="project" value="UniProtKB-SubCell"/>
</dbReference>
<dbReference type="GO" id="GO:0009318">
    <property type="term" value="C:exodeoxyribonuclease VII complex"/>
    <property type="evidence" value="ECO:0007669"/>
    <property type="project" value="InterPro"/>
</dbReference>
<dbReference type="GO" id="GO:0008855">
    <property type="term" value="F:exodeoxyribonuclease VII activity"/>
    <property type="evidence" value="ECO:0007669"/>
    <property type="project" value="UniProtKB-UniRule"/>
</dbReference>
<dbReference type="GO" id="GO:0003676">
    <property type="term" value="F:nucleic acid binding"/>
    <property type="evidence" value="ECO:0007669"/>
    <property type="project" value="InterPro"/>
</dbReference>
<dbReference type="GO" id="GO:0006308">
    <property type="term" value="P:DNA catabolic process"/>
    <property type="evidence" value="ECO:0007669"/>
    <property type="project" value="UniProtKB-UniRule"/>
</dbReference>
<dbReference type="CDD" id="cd04489">
    <property type="entry name" value="ExoVII_LU_OBF"/>
    <property type="match status" value="1"/>
</dbReference>
<dbReference type="HAMAP" id="MF_00378">
    <property type="entry name" value="Exonuc_7_L"/>
    <property type="match status" value="1"/>
</dbReference>
<dbReference type="InterPro" id="IPR003753">
    <property type="entry name" value="Exonuc_VII_L"/>
</dbReference>
<dbReference type="InterPro" id="IPR020579">
    <property type="entry name" value="Exonuc_VII_lsu_C"/>
</dbReference>
<dbReference type="InterPro" id="IPR025824">
    <property type="entry name" value="OB-fold_nuc-bd_dom"/>
</dbReference>
<dbReference type="NCBIfam" id="TIGR00237">
    <property type="entry name" value="xseA"/>
    <property type="match status" value="1"/>
</dbReference>
<dbReference type="PANTHER" id="PTHR30008">
    <property type="entry name" value="EXODEOXYRIBONUCLEASE 7 LARGE SUBUNIT"/>
    <property type="match status" value="1"/>
</dbReference>
<dbReference type="PANTHER" id="PTHR30008:SF0">
    <property type="entry name" value="EXODEOXYRIBONUCLEASE 7 LARGE SUBUNIT"/>
    <property type="match status" value="1"/>
</dbReference>
<dbReference type="Pfam" id="PF02601">
    <property type="entry name" value="Exonuc_VII_L"/>
    <property type="match status" value="2"/>
</dbReference>
<dbReference type="Pfam" id="PF13742">
    <property type="entry name" value="tRNA_anti_2"/>
    <property type="match status" value="1"/>
</dbReference>
<reference key="1">
    <citation type="journal article" date="2006" name="DNA Res.">
        <title>Genome sequence of the cat pathogen, Chlamydophila felis.</title>
        <authorList>
            <person name="Azuma Y."/>
            <person name="Hirakawa H."/>
            <person name="Yamashita A."/>
            <person name="Cai Y."/>
            <person name="Rahman M.A."/>
            <person name="Suzuki H."/>
            <person name="Mitaku S."/>
            <person name="Toh H."/>
            <person name="Goto S."/>
            <person name="Murakami T."/>
            <person name="Sugi K."/>
            <person name="Hayashi H."/>
            <person name="Fukushi H."/>
            <person name="Hattori M."/>
            <person name="Kuhara S."/>
            <person name="Shirai M."/>
        </authorList>
    </citation>
    <scope>NUCLEOTIDE SEQUENCE [LARGE SCALE GENOMIC DNA]</scope>
    <source>
        <strain>Fe/C-56</strain>
    </source>
</reference>
<comment type="function">
    <text evidence="1">Bidirectionally degrades single-stranded DNA into large acid-insoluble oligonucleotides, which are then degraded further into small acid-soluble oligonucleotides.</text>
</comment>
<comment type="catalytic activity">
    <reaction evidence="1">
        <text>Exonucleolytic cleavage in either 5'- to 3'- or 3'- to 5'-direction to yield nucleoside 5'-phosphates.</text>
        <dbReference type="EC" id="3.1.11.6"/>
    </reaction>
</comment>
<comment type="subunit">
    <text evidence="1">Heterooligomer composed of large and small subunits.</text>
</comment>
<comment type="subcellular location">
    <subcellularLocation>
        <location evidence="1">Cytoplasm</location>
    </subcellularLocation>
</comment>
<comment type="similarity">
    <text evidence="1">Belongs to the XseA family.</text>
</comment>
<name>EX7L_CHLFF</name>
<protein>
    <recommendedName>
        <fullName evidence="1">Exodeoxyribonuclease 7 large subunit</fullName>
        <ecNumber evidence="1">3.1.11.6</ecNumber>
    </recommendedName>
    <alternativeName>
        <fullName evidence="1">Exodeoxyribonuclease VII large subunit</fullName>
        <shortName evidence="1">Exonuclease VII large subunit</shortName>
    </alternativeName>
</protein>
<proteinExistence type="inferred from homology"/>
<keyword id="KW-0963">Cytoplasm</keyword>
<keyword id="KW-0269">Exonuclease</keyword>
<keyword id="KW-0378">Hydrolase</keyword>
<keyword id="KW-0540">Nuclease</keyword>
<organism>
    <name type="scientific">Chlamydia felis (strain Fe/C-56)</name>
    <name type="common">Chlamydophila felis</name>
    <dbReference type="NCBI Taxonomy" id="264202"/>
    <lineage>
        <taxon>Bacteria</taxon>
        <taxon>Pseudomonadati</taxon>
        <taxon>Chlamydiota</taxon>
        <taxon>Chlamydiia</taxon>
        <taxon>Chlamydiales</taxon>
        <taxon>Chlamydiaceae</taxon>
        <taxon>Chlamydia/Chlamydophila group</taxon>
        <taxon>Chlamydia</taxon>
    </lineage>
</organism>